<name>Y779_LACPL</name>
<feature type="chain" id="PRO_0000107722" description="Nucleotide-binding protein lp_0779">
    <location>
        <begin position="1"/>
        <end position="294"/>
    </location>
</feature>
<feature type="binding site" evidence="1">
    <location>
        <begin position="12"/>
        <end position="19"/>
    </location>
    <ligand>
        <name>ATP</name>
        <dbReference type="ChEBI" id="CHEBI:30616"/>
    </ligand>
</feature>
<feature type="binding site" evidence="1">
    <location>
        <begin position="62"/>
        <end position="65"/>
    </location>
    <ligand>
        <name>GTP</name>
        <dbReference type="ChEBI" id="CHEBI:37565"/>
    </ligand>
</feature>
<proteinExistence type="inferred from homology"/>
<gene>
    <name type="ordered locus">lp_0779</name>
</gene>
<protein>
    <recommendedName>
        <fullName evidence="1">Nucleotide-binding protein lp_0779</fullName>
    </recommendedName>
</protein>
<keyword id="KW-0067">ATP-binding</keyword>
<keyword id="KW-0342">GTP-binding</keyword>
<keyword id="KW-0547">Nucleotide-binding</keyword>
<keyword id="KW-1185">Reference proteome</keyword>
<organism>
    <name type="scientific">Lactiplantibacillus plantarum (strain ATCC BAA-793 / NCIMB 8826 / WCFS1)</name>
    <name type="common">Lactobacillus plantarum</name>
    <dbReference type="NCBI Taxonomy" id="220668"/>
    <lineage>
        <taxon>Bacteria</taxon>
        <taxon>Bacillati</taxon>
        <taxon>Bacillota</taxon>
        <taxon>Bacilli</taxon>
        <taxon>Lactobacillales</taxon>
        <taxon>Lactobacillaceae</taxon>
        <taxon>Lactiplantibacillus</taxon>
    </lineage>
</organism>
<reference key="1">
    <citation type="journal article" date="2003" name="Proc. Natl. Acad. Sci. U.S.A.">
        <title>Complete genome sequence of Lactobacillus plantarum WCFS1.</title>
        <authorList>
            <person name="Kleerebezem M."/>
            <person name="Boekhorst J."/>
            <person name="van Kranenburg R."/>
            <person name="Molenaar D."/>
            <person name="Kuipers O.P."/>
            <person name="Leer R."/>
            <person name="Tarchini R."/>
            <person name="Peters S.A."/>
            <person name="Sandbrink H.M."/>
            <person name="Fiers M.W.E.J."/>
            <person name="Stiekema W."/>
            <person name="Klein Lankhorst R.M."/>
            <person name="Bron P.A."/>
            <person name="Hoffer S.M."/>
            <person name="Nierop Groot M.N."/>
            <person name="Kerkhoven R."/>
            <person name="De Vries M."/>
            <person name="Ursing B."/>
            <person name="De Vos W.M."/>
            <person name="Siezen R.J."/>
        </authorList>
    </citation>
    <scope>NUCLEOTIDE SEQUENCE [LARGE SCALE GENOMIC DNA]</scope>
    <source>
        <strain>ATCC BAA-793 / NCIMB 8826 / WCFS1</strain>
    </source>
</reference>
<reference key="2">
    <citation type="journal article" date="2012" name="J. Bacteriol.">
        <title>Complete resequencing and reannotation of the Lactobacillus plantarum WCFS1 genome.</title>
        <authorList>
            <person name="Siezen R.J."/>
            <person name="Francke C."/>
            <person name="Renckens B."/>
            <person name="Boekhorst J."/>
            <person name="Wels M."/>
            <person name="Kleerebezem M."/>
            <person name="van Hijum S.A."/>
        </authorList>
    </citation>
    <scope>NUCLEOTIDE SEQUENCE [LARGE SCALE GENOMIC DNA]</scope>
    <scope>GENOME REANNOTATION</scope>
    <source>
        <strain>ATCC BAA-793 / NCIMB 8826 / WCFS1</strain>
    </source>
</reference>
<evidence type="ECO:0000255" key="1">
    <source>
        <dbReference type="HAMAP-Rule" id="MF_00636"/>
    </source>
</evidence>
<sequence length="294" mass="33321">MAESLQLVIISGMSGAGKTVAVQSFEDLGYFCIDNMPPALLPKFSELVEESGKIKKVALVIDLRSRAFYDEIMDMLANLDNTDFVSTRILFLDASNEELVSRYKETRRSHPLAMEGRVMDGVRKERELLAPLKDRASYVIDTSTLTPRELRESIFDKFETDQDETFHIEMLSFGFKYGLPIDADIVMDVRFLPNPYYIPELKKLTGLDKPVADYVMQQPATEAFYQQFLSMLESIMPGYEAEGKSSLTIAIGCTGGQHRSVALTQRIGEALAKHYKVHISHRDIEKRKETVNRS</sequence>
<dbReference type="EMBL" id="AL935263">
    <property type="protein sequence ID" value="CCC78241.1"/>
    <property type="molecule type" value="Genomic_DNA"/>
</dbReference>
<dbReference type="RefSeq" id="YP_004888755.1">
    <property type="nucleotide sequence ID" value="NC_004567.2"/>
</dbReference>
<dbReference type="SMR" id="Q88YI4"/>
<dbReference type="STRING" id="220668.lp_0779"/>
<dbReference type="EnsemblBacteria" id="CCC78241">
    <property type="protein sequence ID" value="CCC78241"/>
    <property type="gene ID" value="lp_0779"/>
</dbReference>
<dbReference type="KEGG" id="lpl:lp_0779"/>
<dbReference type="PATRIC" id="fig|220668.9.peg.658"/>
<dbReference type="eggNOG" id="COG1660">
    <property type="taxonomic scope" value="Bacteria"/>
</dbReference>
<dbReference type="HOGENOM" id="CLU_059558_0_0_9"/>
<dbReference type="OrthoDB" id="9784461at2"/>
<dbReference type="PhylomeDB" id="Q88YI4"/>
<dbReference type="Proteomes" id="UP000000432">
    <property type="component" value="Chromosome"/>
</dbReference>
<dbReference type="GO" id="GO:0005524">
    <property type="term" value="F:ATP binding"/>
    <property type="evidence" value="ECO:0007669"/>
    <property type="project" value="UniProtKB-UniRule"/>
</dbReference>
<dbReference type="GO" id="GO:0005525">
    <property type="term" value="F:GTP binding"/>
    <property type="evidence" value="ECO:0007669"/>
    <property type="project" value="UniProtKB-UniRule"/>
</dbReference>
<dbReference type="Gene3D" id="3.40.50.300">
    <property type="entry name" value="P-loop containing nucleotide triphosphate hydrolases"/>
    <property type="match status" value="1"/>
</dbReference>
<dbReference type="HAMAP" id="MF_00636">
    <property type="entry name" value="RapZ_like"/>
    <property type="match status" value="1"/>
</dbReference>
<dbReference type="InterPro" id="IPR027417">
    <property type="entry name" value="P-loop_NTPase"/>
</dbReference>
<dbReference type="InterPro" id="IPR005337">
    <property type="entry name" value="RapZ-like"/>
</dbReference>
<dbReference type="InterPro" id="IPR053930">
    <property type="entry name" value="RapZ-like_N"/>
</dbReference>
<dbReference type="InterPro" id="IPR053931">
    <property type="entry name" value="RapZ_C"/>
</dbReference>
<dbReference type="NCBIfam" id="NF003828">
    <property type="entry name" value="PRK05416.1"/>
    <property type="match status" value="1"/>
</dbReference>
<dbReference type="PANTHER" id="PTHR30448">
    <property type="entry name" value="RNASE ADAPTER PROTEIN RAPZ"/>
    <property type="match status" value="1"/>
</dbReference>
<dbReference type="PANTHER" id="PTHR30448:SF0">
    <property type="entry name" value="RNASE ADAPTER PROTEIN RAPZ"/>
    <property type="match status" value="1"/>
</dbReference>
<dbReference type="Pfam" id="PF22740">
    <property type="entry name" value="PapZ_C"/>
    <property type="match status" value="1"/>
</dbReference>
<dbReference type="Pfam" id="PF03668">
    <property type="entry name" value="RapZ-like_N"/>
    <property type="match status" value="1"/>
</dbReference>
<dbReference type="PIRSF" id="PIRSF005052">
    <property type="entry name" value="P-loopkin"/>
    <property type="match status" value="1"/>
</dbReference>
<dbReference type="SUPFAM" id="SSF52540">
    <property type="entry name" value="P-loop containing nucleoside triphosphate hydrolases"/>
    <property type="match status" value="1"/>
</dbReference>
<accession>Q88YI4</accession>
<accession>F9UM02</accession>
<comment type="function">
    <text evidence="1">Displays ATPase and GTPase activities.</text>
</comment>
<comment type="similarity">
    <text evidence="1">Belongs to the RapZ-like family.</text>
</comment>